<dbReference type="EMBL" id="AE004092">
    <property type="protein sequence ID" value="AAK34465.1"/>
    <property type="molecule type" value="Genomic_DNA"/>
</dbReference>
<dbReference type="EMBL" id="CP000017">
    <property type="protein sequence ID" value="AAZ52026.1"/>
    <property type="status" value="ALT_INIT"/>
    <property type="molecule type" value="Genomic_DNA"/>
</dbReference>
<dbReference type="RefSeq" id="NP_269744.1">
    <property type="nucleotide sequence ID" value="NC_002737.2"/>
</dbReference>
<dbReference type="SMR" id="P65971"/>
<dbReference type="PaxDb" id="1314-HKU360_01461"/>
<dbReference type="KEGG" id="spy:SPy_1719"/>
<dbReference type="KEGG" id="spz:M5005_Spy1408"/>
<dbReference type="PATRIC" id="fig|160490.10.peg.1495"/>
<dbReference type="HOGENOM" id="CLU_089475_3_0_9"/>
<dbReference type="Proteomes" id="UP000000750">
    <property type="component" value="Chromosome"/>
</dbReference>
<dbReference type="GO" id="GO:0005829">
    <property type="term" value="C:cytosol"/>
    <property type="evidence" value="ECO:0007669"/>
    <property type="project" value="TreeGrafter"/>
</dbReference>
<dbReference type="GO" id="GO:0043024">
    <property type="term" value="F:ribosomal small subunit binding"/>
    <property type="evidence" value="ECO:0007669"/>
    <property type="project" value="TreeGrafter"/>
</dbReference>
<dbReference type="GO" id="GO:0030490">
    <property type="term" value="P:maturation of SSU-rRNA"/>
    <property type="evidence" value="ECO:0007669"/>
    <property type="project" value="UniProtKB-UniRule"/>
</dbReference>
<dbReference type="Gene3D" id="3.30.300.20">
    <property type="match status" value="1"/>
</dbReference>
<dbReference type="HAMAP" id="MF_00003">
    <property type="entry name" value="RbfA"/>
    <property type="match status" value="1"/>
</dbReference>
<dbReference type="InterPro" id="IPR015946">
    <property type="entry name" value="KH_dom-like_a/b"/>
</dbReference>
<dbReference type="InterPro" id="IPR000238">
    <property type="entry name" value="RbfA"/>
</dbReference>
<dbReference type="InterPro" id="IPR023799">
    <property type="entry name" value="RbfA_dom_sf"/>
</dbReference>
<dbReference type="InterPro" id="IPR020053">
    <property type="entry name" value="Ribosome-bd_factorA_CS"/>
</dbReference>
<dbReference type="NCBIfam" id="TIGR00082">
    <property type="entry name" value="rbfA"/>
    <property type="match status" value="1"/>
</dbReference>
<dbReference type="PANTHER" id="PTHR33515">
    <property type="entry name" value="RIBOSOME-BINDING FACTOR A, CHLOROPLASTIC-RELATED"/>
    <property type="match status" value="1"/>
</dbReference>
<dbReference type="PANTHER" id="PTHR33515:SF1">
    <property type="entry name" value="RIBOSOME-BINDING FACTOR A, CHLOROPLASTIC-RELATED"/>
    <property type="match status" value="1"/>
</dbReference>
<dbReference type="Pfam" id="PF02033">
    <property type="entry name" value="RBFA"/>
    <property type="match status" value="1"/>
</dbReference>
<dbReference type="SUPFAM" id="SSF89919">
    <property type="entry name" value="Ribosome-binding factor A, RbfA"/>
    <property type="match status" value="1"/>
</dbReference>
<dbReference type="PROSITE" id="PS01319">
    <property type="entry name" value="RBFA"/>
    <property type="match status" value="1"/>
</dbReference>
<name>RBFA_STRP1</name>
<accession>P65971</accession>
<accession>Q48X99</accession>
<accession>Q99YG2</accession>
<proteinExistence type="inferred from homology"/>
<comment type="function">
    <text evidence="1">One of several proteins that assist in the late maturation steps of the functional core of the 30S ribosomal subunit. Associates with free 30S ribosomal subunits (but not with 30S subunits that are part of 70S ribosomes or polysomes). Required for efficient processing of 16S rRNA. May interact with the 5'-terminal helix region of 16S rRNA.</text>
</comment>
<comment type="subunit">
    <text evidence="1">Monomer. Binds 30S ribosomal subunits, but not 50S ribosomal subunits or 70S ribosomes.</text>
</comment>
<comment type="subcellular location">
    <subcellularLocation>
        <location evidence="1">Cytoplasm</location>
    </subcellularLocation>
</comment>
<comment type="similarity">
    <text evidence="1">Belongs to the RbfA family.</text>
</comment>
<comment type="sequence caution" evidence="2">
    <conflict type="erroneous initiation">
        <sequence resource="EMBL-CDS" id="AAZ52026"/>
    </conflict>
    <text>Extended N-terminus.</text>
</comment>
<reference key="1">
    <citation type="journal article" date="2001" name="Proc. Natl. Acad. Sci. U.S.A.">
        <title>Complete genome sequence of an M1 strain of Streptococcus pyogenes.</title>
        <authorList>
            <person name="Ferretti J.J."/>
            <person name="McShan W.M."/>
            <person name="Ajdic D.J."/>
            <person name="Savic D.J."/>
            <person name="Savic G."/>
            <person name="Lyon K."/>
            <person name="Primeaux C."/>
            <person name="Sezate S."/>
            <person name="Suvorov A.N."/>
            <person name="Kenton S."/>
            <person name="Lai H.S."/>
            <person name="Lin S.P."/>
            <person name="Qian Y."/>
            <person name="Jia H.G."/>
            <person name="Najar F.Z."/>
            <person name="Ren Q."/>
            <person name="Zhu H."/>
            <person name="Song L."/>
            <person name="White J."/>
            <person name="Yuan X."/>
            <person name="Clifton S.W."/>
            <person name="Roe B.A."/>
            <person name="McLaughlin R.E."/>
        </authorList>
    </citation>
    <scope>NUCLEOTIDE SEQUENCE [LARGE SCALE GENOMIC DNA]</scope>
    <source>
        <strain>ATCC 700294 / SF370 / Serotype M1</strain>
    </source>
</reference>
<reference key="2">
    <citation type="journal article" date="2005" name="J. Infect. Dis.">
        <title>Evolutionary origin and emergence of a highly successful clone of serotype M1 group A Streptococcus involved multiple horizontal gene transfer events.</title>
        <authorList>
            <person name="Sumby P."/>
            <person name="Porcella S.F."/>
            <person name="Madrigal A.G."/>
            <person name="Barbian K.D."/>
            <person name="Virtaneva K."/>
            <person name="Ricklefs S.M."/>
            <person name="Sturdevant D.E."/>
            <person name="Graham M.R."/>
            <person name="Vuopio-Varkila J."/>
            <person name="Hoe N.P."/>
            <person name="Musser J.M."/>
        </authorList>
    </citation>
    <scope>NUCLEOTIDE SEQUENCE [LARGE SCALE GENOMIC DNA]</scope>
    <source>
        <strain>ATCC BAA-947 / MGAS5005 / Serotype M1</strain>
    </source>
</reference>
<gene>
    <name evidence="1" type="primary">rbfA</name>
    <name type="ordered locus">SPy_1719</name>
    <name type="ordered locus">M5005_Spy1408</name>
</gene>
<protein>
    <recommendedName>
        <fullName evidence="1">Ribosome-binding factor A</fullName>
    </recommendedName>
</protein>
<keyword id="KW-0963">Cytoplasm</keyword>
<keyword id="KW-1185">Reference proteome</keyword>
<keyword id="KW-0690">Ribosome biogenesis</keyword>
<sequence length="118" mass="13414">MAMANHRIDRVGMEIKREVNDILQKKVRDPRVQGVTITEVQMQGDLSLAKVYYTIMSDLASDNQKAQTGLEKATGTIKRELGKQLTMYKIPDLVFEKDNSIAYGNKIDQLLRDLDNKS</sequence>
<organism>
    <name type="scientific">Streptococcus pyogenes serotype M1</name>
    <dbReference type="NCBI Taxonomy" id="301447"/>
    <lineage>
        <taxon>Bacteria</taxon>
        <taxon>Bacillati</taxon>
        <taxon>Bacillota</taxon>
        <taxon>Bacilli</taxon>
        <taxon>Lactobacillales</taxon>
        <taxon>Streptococcaceae</taxon>
        <taxon>Streptococcus</taxon>
    </lineage>
</organism>
<feature type="chain" id="PRO_0000102747" description="Ribosome-binding factor A">
    <location>
        <begin position="1"/>
        <end position="118"/>
    </location>
</feature>
<evidence type="ECO:0000255" key="1">
    <source>
        <dbReference type="HAMAP-Rule" id="MF_00003"/>
    </source>
</evidence>
<evidence type="ECO:0000305" key="2"/>